<reference key="1">
    <citation type="journal article" date="2007" name="J. Bacteriol.">
        <title>The genome sequence of avian pathogenic Escherichia coli strain O1:K1:H7 shares strong similarities with human extraintestinal pathogenic E. coli genomes.</title>
        <authorList>
            <person name="Johnson T.J."/>
            <person name="Kariyawasam S."/>
            <person name="Wannemuehler Y."/>
            <person name="Mangiamele P."/>
            <person name="Johnson S.J."/>
            <person name="Doetkott C."/>
            <person name="Skyberg J.A."/>
            <person name="Lynne A.M."/>
            <person name="Johnson J.R."/>
            <person name="Nolan L.K."/>
        </authorList>
    </citation>
    <scope>NUCLEOTIDE SEQUENCE [LARGE SCALE GENOMIC DNA]</scope>
</reference>
<organism>
    <name type="scientific">Escherichia coli O1:K1 / APEC</name>
    <dbReference type="NCBI Taxonomy" id="405955"/>
    <lineage>
        <taxon>Bacteria</taxon>
        <taxon>Pseudomonadati</taxon>
        <taxon>Pseudomonadota</taxon>
        <taxon>Gammaproteobacteria</taxon>
        <taxon>Enterobacterales</taxon>
        <taxon>Enterobacteriaceae</taxon>
        <taxon>Escherichia</taxon>
    </lineage>
</organism>
<name>MDTB_ECOK1</name>
<sequence length="1040" mass="112096">MQVLPPSSTGGPSRLFIMRPVATTLLMVAILLAGIIGYRALPVSALPEVDYPTIQVVTLYPGASPDVMTSAVTAPLERQFGQMSGLKQMSSQSSGGASVITLQFQLTLPLDVAEQEVQAAINAATNLLPSDLPNPPVYSKVNPADPPIMTLAVTSTAMPMTQVEDMVETRVAQKISQISGVGLVTLSGGQRPAVRVKLNAQAIAALGLTSETVRTAITGANVNSAKGSLDGPSRAVTLSANDQMQSAEEYRQLIIAYQNGAPIRLGDVATVEQGAENSWLGAWANKEQAIVMNVQRQPGANIISTADSIRQMLPQLTESLPKSVKVTVLSDRTTNIRASVDDTQFELMMAIALVVMIIYLFLRNIPATIIPGVAVPLSLIGTFAVMVFLDFSINNLTLMALTIATGFVVDDAIVVIENISRYIEKGEKPLAAALKGAGEIGFTIISLTFSLIAVLIPLLFMGDIVGRLFREFAITLAVAILISAVVSLTLTPMMCARMLSQESLRKQNRFSRASEKMFDRIIAAYGRGLAKVLNHPWLTLSVALSTLLLSVLLWVFIPKGFFPVQDNGIIQGTLQAPQSSSFANMAQRQRQVADVILQDPAVQSLTSFVGVDGTNPSLNSARLQINLKPLDERDDRVQKVIARLQTAVDKVPGVDLFLQPTQDLTIDTQVSRTQYQFTLQATSLDALSTWVPQLMEKLQQLPQLSDVSSDWQDKGLVAYVNVDRDSASRLGISMADVDNALYNAFGQRLISTIYTQANQYRVVLEHNTENTPGLAALDTIRLTSSDGGVVPLSSIAKIEQRFAPLSINHLDQFPVTTISFNVPDNYSLGDAVQAIMDTEKTLNLPVDITTQFQGSTLAFQSALGSTVWLIVAAVVAMYIVLGILYESFIHPITILSTLPTAGVGALLALMIAGSELDVIAIIGIILLIGIVKKNAIMMIDFALAAEREQGMSPREAIYQACLLRFRPILMTTLAALLGALPLMLSTGVGAELRRPLGIGMVGGLIVSQVLTLFTTPVIYLLFDRLALWTKSRFARHEEEA</sequence>
<gene>
    <name evidence="1" type="primary">mdtB</name>
    <name type="ordered locus">Ecok1_19760</name>
    <name type="ORF">APECO1_1165</name>
</gene>
<keyword id="KW-0997">Cell inner membrane</keyword>
<keyword id="KW-1003">Cell membrane</keyword>
<keyword id="KW-0472">Membrane</keyword>
<keyword id="KW-1185">Reference proteome</keyword>
<keyword id="KW-0812">Transmembrane</keyword>
<keyword id="KW-1133">Transmembrane helix</keyword>
<keyword id="KW-0813">Transport</keyword>
<proteinExistence type="evidence at transcript level"/>
<protein>
    <recommendedName>
        <fullName evidence="1">Multidrug resistance protein MdtB</fullName>
    </recommendedName>
    <alternativeName>
        <fullName evidence="1">Multidrug transporter MdtB</fullName>
    </alternativeName>
</protein>
<dbReference type="EMBL" id="CP000468">
    <property type="protein sequence ID" value="ABJ01470.1"/>
    <property type="molecule type" value="Genomic_DNA"/>
</dbReference>
<dbReference type="RefSeq" id="WP_001197878.1">
    <property type="nucleotide sequence ID" value="NZ_CADILS010000029.1"/>
</dbReference>
<dbReference type="SMR" id="A1ACT0"/>
<dbReference type="KEGG" id="ecv:APECO1_1165"/>
<dbReference type="HOGENOM" id="CLU_002755_1_2_6"/>
<dbReference type="Proteomes" id="UP000008216">
    <property type="component" value="Chromosome"/>
</dbReference>
<dbReference type="GO" id="GO:0005886">
    <property type="term" value="C:plasma membrane"/>
    <property type="evidence" value="ECO:0007669"/>
    <property type="project" value="UniProtKB-SubCell"/>
</dbReference>
<dbReference type="GO" id="GO:0042910">
    <property type="term" value="F:xenobiotic transmembrane transporter activity"/>
    <property type="evidence" value="ECO:0007669"/>
    <property type="project" value="TreeGrafter"/>
</dbReference>
<dbReference type="FunFam" id="1.20.1640.10:FF:000001">
    <property type="entry name" value="Efflux pump membrane transporter"/>
    <property type="match status" value="1"/>
</dbReference>
<dbReference type="FunFam" id="3.30.70.1430:FF:000001">
    <property type="entry name" value="Efflux pump membrane transporter"/>
    <property type="match status" value="1"/>
</dbReference>
<dbReference type="FunFam" id="3.30.2090.10:FF:000003">
    <property type="entry name" value="Multidrug resistance protein MdtB"/>
    <property type="match status" value="1"/>
</dbReference>
<dbReference type="FunFam" id="3.30.2090.10:FF:000006">
    <property type="entry name" value="Multidrug resistance protein MdtB"/>
    <property type="match status" value="1"/>
</dbReference>
<dbReference type="Gene3D" id="3.30.70.1430">
    <property type="entry name" value="Multidrug efflux transporter AcrB pore domain"/>
    <property type="match status" value="2"/>
</dbReference>
<dbReference type="Gene3D" id="3.30.70.1440">
    <property type="entry name" value="Multidrug efflux transporter AcrB pore domain"/>
    <property type="match status" value="1"/>
</dbReference>
<dbReference type="Gene3D" id="3.30.70.1320">
    <property type="entry name" value="Multidrug efflux transporter AcrB pore domain like"/>
    <property type="match status" value="1"/>
</dbReference>
<dbReference type="Gene3D" id="3.30.2090.10">
    <property type="entry name" value="Multidrug efflux transporter AcrB TolC docking domain, DN and DC subdomains"/>
    <property type="match status" value="2"/>
</dbReference>
<dbReference type="Gene3D" id="1.20.1640.10">
    <property type="entry name" value="Multidrug efflux transporter AcrB transmembrane domain"/>
    <property type="match status" value="2"/>
</dbReference>
<dbReference type="HAMAP" id="MF_01423">
    <property type="entry name" value="MdtB"/>
    <property type="match status" value="1"/>
</dbReference>
<dbReference type="InterPro" id="IPR027463">
    <property type="entry name" value="AcrB_DN_DC_subdom"/>
</dbReference>
<dbReference type="InterPro" id="IPR001036">
    <property type="entry name" value="Acrflvin-R"/>
</dbReference>
<dbReference type="InterPro" id="IPR022831">
    <property type="entry name" value="Multidrug-R_MdtB"/>
</dbReference>
<dbReference type="NCBIfam" id="NF007798">
    <property type="entry name" value="PRK10503.1"/>
    <property type="match status" value="1"/>
</dbReference>
<dbReference type="NCBIfam" id="NF033617">
    <property type="entry name" value="RND_permease_2"/>
    <property type="match status" value="1"/>
</dbReference>
<dbReference type="PANTHER" id="PTHR32063">
    <property type="match status" value="1"/>
</dbReference>
<dbReference type="PANTHER" id="PTHR32063:SF21">
    <property type="entry name" value="MULTIDRUG RESISTANCE PROTEIN MDTB"/>
    <property type="match status" value="1"/>
</dbReference>
<dbReference type="Pfam" id="PF00873">
    <property type="entry name" value="ACR_tran"/>
    <property type="match status" value="1"/>
</dbReference>
<dbReference type="PRINTS" id="PR00702">
    <property type="entry name" value="ACRIFLAVINRP"/>
</dbReference>
<dbReference type="SUPFAM" id="SSF82693">
    <property type="entry name" value="Multidrug efflux transporter AcrB pore domain, PN1, PN2, PC1 and PC2 subdomains"/>
    <property type="match status" value="3"/>
</dbReference>
<dbReference type="SUPFAM" id="SSF82714">
    <property type="entry name" value="Multidrug efflux transporter AcrB TolC docking domain, DN and DC subdomains"/>
    <property type="match status" value="2"/>
</dbReference>
<dbReference type="SUPFAM" id="SSF82866">
    <property type="entry name" value="Multidrug efflux transporter AcrB transmembrane domain"/>
    <property type="match status" value="2"/>
</dbReference>
<evidence type="ECO:0000255" key="1">
    <source>
        <dbReference type="HAMAP-Rule" id="MF_01423"/>
    </source>
</evidence>
<feature type="chain" id="PRO_1000024300" description="Multidrug resistance protein MdtB">
    <location>
        <begin position="1"/>
        <end position="1040"/>
    </location>
</feature>
<feature type="transmembrane region" description="Helical" evidence="1">
    <location>
        <begin position="16"/>
        <end position="36"/>
    </location>
</feature>
<feature type="transmembrane region" description="Helical" evidence="1">
    <location>
        <begin position="347"/>
        <end position="367"/>
    </location>
</feature>
<feature type="transmembrane region" description="Helical" evidence="1">
    <location>
        <begin position="369"/>
        <end position="389"/>
    </location>
</feature>
<feature type="transmembrane region" description="Helical" evidence="1">
    <location>
        <begin position="396"/>
        <end position="416"/>
    </location>
</feature>
<feature type="transmembrane region" description="Helical" evidence="1">
    <location>
        <begin position="440"/>
        <end position="460"/>
    </location>
</feature>
<feature type="transmembrane region" description="Helical" evidence="1">
    <location>
        <begin position="472"/>
        <end position="492"/>
    </location>
</feature>
<feature type="transmembrane region" description="Helical" evidence="1">
    <location>
        <begin position="537"/>
        <end position="557"/>
    </location>
</feature>
<feature type="transmembrane region" description="Helical" evidence="1">
    <location>
        <begin position="863"/>
        <end position="883"/>
    </location>
</feature>
<feature type="transmembrane region" description="Helical" evidence="1">
    <location>
        <begin position="888"/>
        <end position="908"/>
    </location>
</feature>
<feature type="transmembrane region" description="Helical" evidence="1">
    <location>
        <begin position="911"/>
        <end position="931"/>
    </location>
</feature>
<feature type="transmembrane region" description="Helical" evidence="1">
    <location>
        <begin position="968"/>
        <end position="988"/>
    </location>
</feature>
<feature type="transmembrane region" description="Helical" evidence="1">
    <location>
        <begin position="998"/>
        <end position="1018"/>
    </location>
</feature>
<comment type="function">
    <text evidence="1">The MdtABC tripartite complex confers resistance against novobiocin and deoxycholate.</text>
</comment>
<comment type="subunit">
    <text evidence="1">Part of a tripartite efflux system composed of MdtA, MdtB and MdtC. MdtB forms a heteromultimer with MdtC.</text>
</comment>
<comment type="subcellular location">
    <subcellularLocation>
        <location evidence="1">Cell inner membrane</location>
        <topology evidence="1">Multi-pass membrane protein</topology>
    </subcellularLocation>
</comment>
<comment type="induction">
    <text>The mdtABC operon is transcriptionally activated by BaeR.</text>
</comment>
<comment type="similarity">
    <text evidence="1">Belongs to the resistance-nodulation-cell division (RND) (TC 2.A.6) family. MdtB subfamily.</text>
</comment>
<accession>A1ACT0</accession>